<dbReference type="EC" id="2.7.1.2" evidence="1"/>
<dbReference type="EMBL" id="CP000282">
    <property type="protein sequence ID" value="ABD80280.1"/>
    <property type="molecule type" value="Genomic_DNA"/>
</dbReference>
<dbReference type="SMR" id="Q21LZ9"/>
<dbReference type="STRING" id="203122.Sde_1018"/>
<dbReference type="KEGG" id="sde:Sde_1018"/>
<dbReference type="eggNOG" id="COG0837">
    <property type="taxonomic scope" value="Bacteria"/>
</dbReference>
<dbReference type="HOGENOM" id="CLU_042582_1_0_6"/>
<dbReference type="Proteomes" id="UP000001947">
    <property type="component" value="Chromosome"/>
</dbReference>
<dbReference type="GO" id="GO:0005829">
    <property type="term" value="C:cytosol"/>
    <property type="evidence" value="ECO:0007669"/>
    <property type="project" value="TreeGrafter"/>
</dbReference>
<dbReference type="GO" id="GO:0005524">
    <property type="term" value="F:ATP binding"/>
    <property type="evidence" value="ECO:0007669"/>
    <property type="project" value="UniProtKB-UniRule"/>
</dbReference>
<dbReference type="GO" id="GO:0005536">
    <property type="term" value="F:D-glucose binding"/>
    <property type="evidence" value="ECO:0007669"/>
    <property type="project" value="InterPro"/>
</dbReference>
<dbReference type="GO" id="GO:0004340">
    <property type="term" value="F:glucokinase activity"/>
    <property type="evidence" value="ECO:0007669"/>
    <property type="project" value="UniProtKB-UniRule"/>
</dbReference>
<dbReference type="GO" id="GO:0006096">
    <property type="term" value="P:glycolytic process"/>
    <property type="evidence" value="ECO:0007669"/>
    <property type="project" value="UniProtKB-UniRule"/>
</dbReference>
<dbReference type="CDD" id="cd24008">
    <property type="entry name" value="ASKHA_NBD_GLK"/>
    <property type="match status" value="1"/>
</dbReference>
<dbReference type="Gene3D" id="3.30.420.40">
    <property type="match status" value="1"/>
</dbReference>
<dbReference type="Gene3D" id="3.40.367.20">
    <property type="match status" value="1"/>
</dbReference>
<dbReference type="HAMAP" id="MF_00524">
    <property type="entry name" value="Glucokinase"/>
    <property type="match status" value="1"/>
</dbReference>
<dbReference type="InterPro" id="IPR043129">
    <property type="entry name" value="ATPase_NBD"/>
</dbReference>
<dbReference type="InterPro" id="IPR050201">
    <property type="entry name" value="Bacterial_glucokinase"/>
</dbReference>
<dbReference type="InterPro" id="IPR003836">
    <property type="entry name" value="Glucokinase"/>
</dbReference>
<dbReference type="NCBIfam" id="TIGR00749">
    <property type="entry name" value="glk"/>
    <property type="match status" value="1"/>
</dbReference>
<dbReference type="NCBIfam" id="NF009073">
    <property type="entry name" value="PRK12408.1"/>
    <property type="match status" value="1"/>
</dbReference>
<dbReference type="PANTHER" id="PTHR47690">
    <property type="entry name" value="GLUCOKINASE"/>
    <property type="match status" value="1"/>
</dbReference>
<dbReference type="PANTHER" id="PTHR47690:SF1">
    <property type="entry name" value="GLUCOKINASE"/>
    <property type="match status" value="1"/>
</dbReference>
<dbReference type="Pfam" id="PF02685">
    <property type="entry name" value="Glucokinase"/>
    <property type="match status" value="1"/>
</dbReference>
<dbReference type="SUPFAM" id="SSF53067">
    <property type="entry name" value="Actin-like ATPase domain"/>
    <property type="match status" value="1"/>
</dbReference>
<proteinExistence type="inferred from homology"/>
<evidence type="ECO:0000255" key="1">
    <source>
        <dbReference type="HAMAP-Rule" id="MF_00524"/>
    </source>
</evidence>
<reference key="1">
    <citation type="journal article" date="2008" name="PLoS Genet.">
        <title>Complete genome sequence of the complex carbohydrate-degrading marine bacterium, Saccharophagus degradans strain 2-40 T.</title>
        <authorList>
            <person name="Weiner R.M."/>
            <person name="Taylor L.E. II"/>
            <person name="Henrissat B."/>
            <person name="Hauser L."/>
            <person name="Land M."/>
            <person name="Coutinho P.M."/>
            <person name="Rancurel C."/>
            <person name="Saunders E.H."/>
            <person name="Longmire A.G."/>
            <person name="Zhang H."/>
            <person name="Bayer E.A."/>
            <person name="Gilbert H.J."/>
            <person name="Larimer F."/>
            <person name="Zhulin I.B."/>
            <person name="Ekborg N.A."/>
            <person name="Lamed R."/>
            <person name="Richardson P.M."/>
            <person name="Borovok I."/>
            <person name="Hutcheson S."/>
        </authorList>
    </citation>
    <scope>NUCLEOTIDE SEQUENCE [LARGE SCALE GENOMIC DNA]</scope>
    <source>
        <strain>2-40 / ATCC 43961 / DSM 17024</strain>
    </source>
</reference>
<feature type="chain" id="PRO_0000268784" description="Glucokinase">
    <location>
        <begin position="1"/>
        <end position="321"/>
    </location>
</feature>
<feature type="binding site" evidence="1">
    <location>
        <begin position="9"/>
        <end position="14"/>
    </location>
    <ligand>
        <name>ATP</name>
        <dbReference type="ChEBI" id="CHEBI:30616"/>
    </ligand>
</feature>
<comment type="catalytic activity">
    <reaction evidence="1">
        <text>D-glucose + ATP = D-glucose 6-phosphate + ADP + H(+)</text>
        <dbReference type="Rhea" id="RHEA:17825"/>
        <dbReference type="ChEBI" id="CHEBI:4167"/>
        <dbReference type="ChEBI" id="CHEBI:15378"/>
        <dbReference type="ChEBI" id="CHEBI:30616"/>
        <dbReference type="ChEBI" id="CHEBI:61548"/>
        <dbReference type="ChEBI" id="CHEBI:456216"/>
        <dbReference type="EC" id="2.7.1.2"/>
    </reaction>
</comment>
<comment type="subcellular location">
    <subcellularLocation>
        <location evidence="1">Cytoplasm</location>
    </subcellularLocation>
</comment>
<comment type="similarity">
    <text evidence="1">Belongs to the bacterial glucokinase family.</text>
</comment>
<name>GLK_SACD2</name>
<keyword id="KW-0067">ATP-binding</keyword>
<keyword id="KW-0963">Cytoplasm</keyword>
<keyword id="KW-0324">Glycolysis</keyword>
<keyword id="KW-0418">Kinase</keyword>
<keyword id="KW-0547">Nucleotide-binding</keyword>
<keyword id="KW-1185">Reference proteome</keyword>
<keyword id="KW-0808">Transferase</keyword>
<accession>Q21LZ9</accession>
<sequence>MFMYPYIVADIGGTNARFALVTGKKGNAFNLEQIQILNGSEFPRLQDAMQHYIDTLGGEKPKAACVAIAGPIDGDNARMTNLNWEFSQAAVKAEFGFDKYDTLNDFGALAVATSSLQADNLIEIKAGTMDPKGNKAILGPGTGLGVAGLACAGDSWLPIPSEGGHVNVAPATQLECEVIRAAMAEHGHVSAETFISGPGLVRLYRALATVRGETPKNYEPKDITAGALDGTDDLCKETLDLFCSFIGSLSGNLALTYGAKGGVYLAGGVLPRFIDYFKSSDFVKRFSEKGVMSHYVENIPVNLISYEYTAFVGAAAWLDQL</sequence>
<organism>
    <name type="scientific">Saccharophagus degradans (strain 2-40 / ATCC 43961 / DSM 17024)</name>
    <dbReference type="NCBI Taxonomy" id="203122"/>
    <lineage>
        <taxon>Bacteria</taxon>
        <taxon>Pseudomonadati</taxon>
        <taxon>Pseudomonadota</taxon>
        <taxon>Gammaproteobacteria</taxon>
        <taxon>Cellvibrionales</taxon>
        <taxon>Cellvibrionaceae</taxon>
        <taxon>Saccharophagus</taxon>
    </lineage>
</organism>
<gene>
    <name evidence="1" type="primary">glk</name>
    <name type="ordered locus">Sde_1018</name>
</gene>
<protein>
    <recommendedName>
        <fullName evidence="1">Glucokinase</fullName>
        <ecNumber evidence="1">2.7.1.2</ecNumber>
    </recommendedName>
    <alternativeName>
        <fullName evidence="1">Glucose kinase</fullName>
    </alternativeName>
</protein>